<gene>
    <name evidence="1" type="primary">atpE</name>
    <name type="ordered locus">EcE24377A_4253</name>
</gene>
<name>ATPL_ECO24</name>
<dbReference type="EMBL" id="CP000800">
    <property type="protein sequence ID" value="ABV19723.1"/>
    <property type="molecule type" value="Genomic_DNA"/>
</dbReference>
<dbReference type="RefSeq" id="WP_000429386.1">
    <property type="nucleotide sequence ID" value="NC_009801.1"/>
</dbReference>
<dbReference type="SMR" id="A7ZTU9"/>
<dbReference type="GeneID" id="98390858"/>
<dbReference type="KEGG" id="ecw:EcE24377A_4253"/>
<dbReference type="HOGENOM" id="CLU_148047_1_0_6"/>
<dbReference type="Proteomes" id="UP000001122">
    <property type="component" value="Chromosome"/>
</dbReference>
<dbReference type="GO" id="GO:0005886">
    <property type="term" value="C:plasma membrane"/>
    <property type="evidence" value="ECO:0007669"/>
    <property type="project" value="UniProtKB-SubCell"/>
</dbReference>
<dbReference type="GO" id="GO:0045259">
    <property type="term" value="C:proton-transporting ATP synthase complex"/>
    <property type="evidence" value="ECO:0007669"/>
    <property type="project" value="UniProtKB-KW"/>
</dbReference>
<dbReference type="GO" id="GO:0033177">
    <property type="term" value="C:proton-transporting two-sector ATPase complex, proton-transporting domain"/>
    <property type="evidence" value="ECO:0007669"/>
    <property type="project" value="InterPro"/>
</dbReference>
<dbReference type="GO" id="GO:0008289">
    <property type="term" value="F:lipid binding"/>
    <property type="evidence" value="ECO:0007669"/>
    <property type="project" value="UniProtKB-KW"/>
</dbReference>
<dbReference type="GO" id="GO:0046933">
    <property type="term" value="F:proton-transporting ATP synthase activity, rotational mechanism"/>
    <property type="evidence" value="ECO:0007669"/>
    <property type="project" value="UniProtKB-UniRule"/>
</dbReference>
<dbReference type="CDD" id="cd18185">
    <property type="entry name" value="ATP-synt_Fo_c_ATPE"/>
    <property type="match status" value="1"/>
</dbReference>
<dbReference type="FunFam" id="1.20.20.10:FF:000002">
    <property type="entry name" value="ATP synthase subunit c"/>
    <property type="match status" value="1"/>
</dbReference>
<dbReference type="Gene3D" id="1.20.20.10">
    <property type="entry name" value="F1F0 ATP synthase subunit C"/>
    <property type="match status" value="1"/>
</dbReference>
<dbReference type="HAMAP" id="MF_01396">
    <property type="entry name" value="ATP_synth_c_bact"/>
    <property type="match status" value="1"/>
</dbReference>
<dbReference type="InterPro" id="IPR005953">
    <property type="entry name" value="ATP_synth_csu_bac/chlpt"/>
</dbReference>
<dbReference type="InterPro" id="IPR000454">
    <property type="entry name" value="ATP_synth_F0_csu"/>
</dbReference>
<dbReference type="InterPro" id="IPR020537">
    <property type="entry name" value="ATP_synth_F0_csu_DDCD_BS"/>
</dbReference>
<dbReference type="InterPro" id="IPR038662">
    <property type="entry name" value="ATP_synth_F0_csu_sf"/>
</dbReference>
<dbReference type="InterPro" id="IPR002379">
    <property type="entry name" value="ATPase_proteolipid_c-like_dom"/>
</dbReference>
<dbReference type="InterPro" id="IPR035921">
    <property type="entry name" value="F/V-ATP_Csub_sf"/>
</dbReference>
<dbReference type="NCBIfam" id="TIGR01260">
    <property type="entry name" value="ATP_synt_c"/>
    <property type="match status" value="1"/>
</dbReference>
<dbReference type="NCBIfam" id="NF005363">
    <property type="entry name" value="PRK06876.1"/>
    <property type="match status" value="1"/>
</dbReference>
<dbReference type="Pfam" id="PF00137">
    <property type="entry name" value="ATP-synt_C"/>
    <property type="match status" value="1"/>
</dbReference>
<dbReference type="PRINTS" id="PR00124">
    <property type="entry name" value="ATPASEC"/>
</dbReference>
<dbReference type="SUPFAM" id="SSF81333">
    <property type="entry name" value="F1F0 ATP synthase subunit C"/>
    <property type="match status" value="1"/>
</dbReference>
<dbReference type="PROSITE" id="PS00605">
    <property type="entry name" value="ATPASE_C"/>
    <property type="match status" value="1"/>
</dbReference>
<organism>
    <name type="scientific">Escherichia coli O139:H28 (strain E24377A / ETEC)</name>
    <dbReference type="NCBI Taxonomy" id="331111"/>
    <lineage>
        <taxon>Bacteria</taxon>
        <taxon>Pseudomonadati</taxon>
        <taxon>Pseudomonadota</taxon>
        <taxon>Gammaproteobacteria</taxon>
        <taxon>Enterobacterales</taxon>
        <taxon>Enterobacteriaceae</taxon>
        <taxon>Escherichia</taxon>
    </lineage>
</organism>
<proteinExistence type="inferred from homology"/>
<keyword id="KW-0066">ATP synthesis</keyword>
<keyword id="KW-0997">Cell inner membrane</keyword>
<keyword id="KW-1003">Cell membrane</keyword>
<keyword id="KW-0138">CF(0)</keyword>
<keyword id="KW-0375">Hydrogen ion transport</keyword>
<keyword id="KW-0406">Ion transport</keyword>
<keyword id="KW-0446">Lipid-binding</keyword>
<keyword id="KW-0472">Membrane</keyword>
<keyword id="KW-1185">Reference proteome</keyword>
<keyword id="KW-0812">Transmembrane</keyword>
<keyword id="KW-1133">Transmembrane helix</keyword>
<keyword id="KW-0813">Transport</keyword>
<evidence type="ECO:0000255" key="1">
    <source>
        <dbReference type="HAMAP-Rule" id="MF_01396"/>
    </source>
</evidence>
<protein>
    <recommendedName>
        <fullName evidence="1">ATP synthase subunit c</fullName>
    </recommendedName>
    <alternativeName>
        <fullName evidence="1">ATP synthase F(0) sector subunit c</fullName>
    </alternativeName>
    <alternativeName>
        <fullName evidence="1">F-type ATPase subunit c</fullName>
        <shortName evidence="1">F-ATPase subunit c</shortName>
    </alternativeName>
    <alternativeName>
        <fullName evidence="1">Lipid-binding protein</fullName>
    </alternativeName>
</protein>
<feature type="chain" id="PRO_1000184360" description="ATP synthase subunit c">
    <location>
        <begin position="1"/>
        <end position="79"/>
    </location>
</feature>
<feature type="transmembrane region" description="Helical" evidence="1">
    <location>
        <begin position="11"/>
        <end position="31"/>
    </location>
</feature>
<feature type="transmembrane region" description="Helical" evidence="1">
    <location>
        <begin position="53"/>
        <end position="73"/>
    </location>
</feature>
<feature type="site" description="Reversibly protonated during proton transport" evidence="1">
    <location>
        <position position="61"/>
    </location>
</feature>
<comment type="function">
    <text evidence="1">F(1)F(0) ATP synthase produces ATP from ADP in the presence of a proton or sodium gradient. F-type ATPases consist of two structural domains, F(1) containing the extramembraneous catalytic core and F(0) containing the membrane proton channel, linked together by a central stalk and a peripheral stalk. During catalysis, ATP synthesis in the catalytic domain of F(1) is coupled via a rotary mechanism of the central stalk subunits to proton translocation.</text>
</comment>
<comment type="function">
    <text evidence="1">Key component of the F(0) channel; it plays a direct role in translocation across the membrane. A homomeric c-ring of between 10-14 subunits forms the central stalk rotor element with the F(1) delta and epsilon subunits.</text>
</comment>
<comment type="subunit">
    <text evidence="1">F-type ATPases have 2 components, F(1) - the catalytic core - and F(0) - the membrane proton channel. F(1) has five subunits: alpha(3), beta(3), gamma(1), delta(1), epsilon(1). F(0) has three main subunits: a(1), b(2) and c(10-14). The alpha and beta chains form an alternating ring which encloses part of the gamma chain. F(1) is attached to F(0) by a central stalk formed by the gamma and epsilon chains, while a peripheral stalk is formed by the delta and b chains.</text>
</comment>
<comment type="subcellular location">
    <subcellularLocation>
        <location evidence="1">Cell inner membrane</location>
        <topology evidence="1">Multi-pass membrane protein</topology>
    </subcellularLocation>
</comment>
<comment type="similarity">
    <text evidence="1">Belongs to the ATPase C chain family.</text>
</comment>
<accession>A7ZTU9</accession>
<sequence>MENLNMDLLYMAAAVMMGLAAIGAAIGIGILGGKFLEGAARQPDLIPLLRTQFFIVMGLVDAIPMIAVGLGLYVMFAVA</sequence>
<reference key="1">
    <citation type="journal article" date="2008" name="J. Bacteriol.">
        <title>The pangenome structure of Escherichia coli: comparative genomic analysis of E. coli commensal and pathogenic isolates.</title>
        <authorList>
            <person name="Rasko D.A."/>
            <person name="Rosovitz M.J."/>
            <person name="Myers G.S.A."/>
            <person name="Mongodin E.F."/>
            <person name="Fricke W.F."/>
            <person name="Gajer P."/>
            <person name="Crabtree J."/>
            <person name="Sebaihia M."/>
            <person name="Thomson N.R."/>
            <person name="Chaudhuri R."/>
            <person name="Henderson I.R."/>
            <person name="Sperandio V."/>
            <person name="Ravel J."/>
        </authorList>
    </citation>
    <scope>NUCLEOTIDE SEQUENCE [LARGE SCALE GENOMIC DNA]</scope>
    <source>
        <strain>E24377A / ETEC</strain>
    </source>
</reference>